<accession>Q2JT19</accession>
<name>RL27_SYNJA</name>
<protein>
    <recommendedName>
        <fullName evidence="1">Large ribosomal subunit protein bL27</fullName>
    </recommendedName>
    <alternativeName>
        <fullName evidence="2">50S ribosomal protein L27</fullName>
    </alternativeName>
</protein>
<dbReference type="EMBL" id="CP000239">
    <property type="protein sequence ID" value="ABD00191.1"/>
    <property type="molecule type" value="Genomic_DNA"/>
</dbReference>
<dbReference type="RefSeq" id="WP_011430865.1">
    <property type="nucleotide sequence ID" value="NC_007775.1"/>
</dbReference>
<dbReference type="SMR" id="Q2JT19"/>
<dbReference type="STRING" id="321327.CYA_2051"/>
<dbReference type="KEGG" id="cya:CYA_2051"/>
<dbReference type="eggNOG" id="COG0211">
    <property type="taxonomic scope" value="Bacteria"/>
</dbReference>
<dbReference type="HOGENOM" id="CLU_095424_4_0_3"/>
<dbReference type="OrthoDB" id="9803474at2"/>
<dbReference type="Proteomes" id="UP000008818">
    <property type="component" value="Chromosome"/>
</dbReference>
<dbReference type="GO" id="GO:0022625">
    <property type="term" value="C:cytosolic large ribosomal subunit"/>
    <property type="evidence" value="ECO:0007669"/>
    <property type="project" value="TreeGrafter"/>
</dbReference>
<dbReference type="GO" id="GO:0003735">
    <property type="term" value="F:structural constituent of ribosome"/>
    <property type="evidence" value="ECO:0007669"/>
    <property type="project" value="InterPro"/>
</dbReference>
<dbReference type="GO" id="GO:0006412">
    <property type="term" value="P:translation"/>
    <property type="evidence" value="ECO:0007669"/>
    <property type="project" value="UniProtKB-UniRule"/>
</dbReference>
<dbReference type="FunFam" id="2.40.50.100:FF:000004">
    <property type="entry name" value="50S ribosomal protein L27"/>
    <property type="match status" value="1"/>
</dbReference>
<dbReference type="Gene3D" id="2.40.50.100">
    <property type="match status" value="1"/>
</dbReference>
<dbReference type="HAMAP" id="MF_00539">
    <property type="entry name" value="Ribosomal_bL27"/>
    <property type="match status" value="1"/>
</dbReference>
<dbReference type="InterPro" id="IPR001684">
    <property type="entry name" value="Ribosomal_bL27"/>
</dbReference>
<dbReference type="InterPro" id="IPR018261">
    <property type="entry name" value="Ribosomal_bL27_CS"/>
</dbReference>
<dbReference type="NCBIfam" id="TIGR00062">
    <property type="entry name" value="L27"/>
    <property type="match status" value="1"/>
</dbReference>
<dbReference type="PANTHER" id="PTHR15893:SF0">
    <property type="entry name" value="LARGE RIBOSOMAL SUBUNIT PROTEIN BL27M"/>
    <property type="match status" value="1"/>
</dbReference>
<dbReference type="PANTHER" id="PTHR15893">
    <property type="entry name" value="RIBOSOMAL PROTEIN L27"/>
    <property type="match status" value="1"/>
</dbReference>
<dbReference type="Pfam" id="PF01016">
    <property type="entry name" value="Ribosomal_L27"/>
    <property type="match status" value="1"/>
</dbReference>
<dbReference type="PRINTS" id="PR00063">
    <property type="entry name" value="RIBOSOMALL27"/>
</dbReference>
<dbReference type="SUPFAM" id="SSF110324">
    <property type="entry name" value="Ribosomal L27 protein-like"/>
    <property type="match status" value="1"/>
</dbReference>
<dbReference type="PROSITE" id="PS00831">
    <property type="entry name" value="RIBOSOMAL_L27"/>
    <property type="match status" value="1"/>
</dbReference>
<feature type="chain" id="PRO_1000017630" description="Large ribosomal subunit protein bL27">
    <location>
        <begin position="1"/>
        <end position="89"/>
    </location>
</feature>
<reference key="1">
    <citation type="journal article" date="2007" name="ISME J.">
        <title>Population level functional diversity in a microbial community revealed by comparative genomic and metagenomic analyses.</title>
        <authorList>
            <person name="Bhaya D."/>
            <person name="Grossman A.R."/>
            <person name="Steunou A.-S."/>
            <person name="Khuri N."/>
            <person name="Cohan F.M."/>
            <person name="Hamamura N."/>
            <person name="Melendrez M.C."/>
            <person name="Bateson M.M."/>
            <person name="Ward D.M."/>
            <person name="Heidelberg J.F."/>
        </authorList>
    </citation>
    <scope>NUCLEOTIDE SEQUENCE [LARGE SCALE GENOMIC DNA]</scope>
    <source>
        <strain>JA-3-3Ab</strain>
    </source>
</reference>
<evidence type="ECO:0000255" key="1">
    <source>
        <dbReference type="HAMAP-Rule" id="MF_00539"/>
    </source>
</evidence>
<evidence type="ECO:0000305" key="2"/>
<gene>
    <name evidence="1" type="primary">rpmA</name>
    <name evidence="1" type="synonym">rpl27</name>
    <name type="ordered locus">CYA_2051</name>
</gene>
<comment type="similarity">
    <text evidence="1">Belongs to the bacterial ribosomal protein bL27 family.</text>
</comment>
<keyword id="KW-0687">Ribonucleoprotein</keyword>
<keyword id="KW-0689">Ribosomal protein</keyword>
<organism>
    <name type="scientific">Synechococcus sp. (strain JA-3-3Ab)</name>
    <name type="common">Cyanobacteria bacterium Yellowstone A-Prime</name>
    <dbReference type="NCBI Taxonomy" id="321327"/>
    <lineage>
        <taxon>Bacteria</taxon>
        <taxon>Bacillati</taxon>
        <taxon>Cyanobacteriota</taxon>
        <taxon>Cyanophyceae</taxon>
        <taxon>Synechococcales</taxon>
        <taxon>Synechococcaceae</taxon>
        <taxon>Synechococcus</taxon>
    </lineage>
</organism>
<sequence>MAHKKGTGSTRNGRDSNAKRLGVKCFGGELVHPGYILVRQRGTKFHPGVNVRRGGDDTLFAVATGIVTFERYGKWRKKVSVYPVEAAAQ</sequence>
<proteinExistence type="inferred from homology"/>